<evidence type="ECO:0000250" key="1"/>
<evidence type="ECO:0000305" key="2"/>
<evidence type="ECO:0007829" key="3">
    <source>
        <dbReference type="PDB" id="2GHJ"/>
    </source>
</evidence>
<accession>O67086</accession>
<protein>
    <recommendedName>
        <fullName evidence="2">Large ribosomal subunit protein bL20</fullName>
    </recommendedName>
    <alternativeName>
        <fullName>50S ribosomal protein L20</fullName>
    </alternativeName>
</protein>
<proteinExistence type="evidence at protein level"/>
<organism>
    <name type="scientific">Aquifex aeolicus (strain VF5)</name>
    <dbReference type="NCBI Taxonomy" id="224324"/>
    <lineage>
        <taxon>Bacteria</taxon>
        <taxon>Pseudomonadati</taxon>
        <taxon>Aquificota</taxon>
        <taxon>Aquificia</taxon>
        <taxon>Aquificales</taxon>
        <taxon>Aquificaceae</taxon>
        <taxon>Aquifex</taxon>
    </lineage>
</organism>
<sequence>MRVKGPSSRRKKKKILKLAKGYRGQRSRSYRRAKEAVMRALYYQYRDRKLRKREFRRLWIARINAAVRAYGLNYSTFINGLKKAGIELDRKILADMAVRDPQAFEQVVNKVKEALQVQ</sequence>
<keyword id="KW-0002">3D-structure</keyword>
<keyword id="KW-1185">Reference proteome</keyword>
<keyword id="KW-0687">Ribonucleoprotein</keyword>
<keyword id="KW-0689">Ribosomal protein</keyword>
<keyword id="KW-0694">RNA-binding</keyword>
<keyword id="KW-0699">rRNA-binding</keyword>
<reference key="1">
    <citation type="journal article" date="1998" name="Nature">
        <title>The complete genome of the hyperthermophilic bacterium Aquifex aeolicus.</title>
        <authorList>
            <person name="Deckert G."/>
            <person name="Warren P.V."/>
            <person name="Gaasterland T."/>
            <person name="Young W.G."/>
            <person name="Lenox A.L."/>
            <person name="Graham D.E."/>
            <person name="Overbeek R."/>
            <person name="Snead M.A."/>
            <person name="Keller M."/>
            <person name="Aujay M."/>
            <person name="Huber R."/>
            <person name="Feldman R.A."/>
            <person name="Short J.M."/>
            <person name="Olsen G.J."/>
            <person name="Swanson R.V."/>
        </authorList>
    </citation>
    <scope>NUCLEOTIDE SEQUENCE [LARGE SCALE GENOMIC DNA]</scope>
    <source>
        <strain>VF5</strain>
    </source>
</reference>
<comment type="function">
    <text evidence="1">Binds directly to 23S ribosomal RNA and is necessary for the in vitro assembly process of the 50S ribosomal subunit. It is not involved in the protein synthesizing functions of that subunit (By similarity).</text>
</comment>
<comment type="similarity">
    <text evidence="2">Belongs to the bacterial ribosomal protein bL20 family.</text>
</comment>
<dbReference type="EMBL" id="AE000657">
    <property type="protein sequence ID" value="AAC07052.1"/>
    <property type="molecule type" value="Genomic_DNA"/>
</dbReference>
<dbReference type="PIR" id="C70382">
    <property type="entry name" value="C70382"/>
</dbReference>
<dbReference type="RefSeq" id="NP_213649.1">
    <property type="nucleotide sequence ID" value="NC_000918.1"/>
</dbReference>
<dbReference type="RefSeq" id="WP_010880587.1">
    <property type="nucleotide sequence ID" value="NC_000918.1"/>
</dbReference>
<dbReference type="PDB" id="1GYZ">
    <property type="method" value="NMR"/>
    <property type="chains" value="A=59-118"/>
</dbReference>
<dbReference type="PDB" id="2GHJ">
    <property type="method" value="X-ray"/>
    <property type="resolution" value="2.90 A"/>
    <property type="chains" value="A/B/D/E=1-118"/>
</dbReference>
<dbReference type="PDBsum" id="1GYZ"/>
<dbReference type="PDBsum" id="2GHJ"/>
<dbReference type="SMR" id="O67086"/>
<dbReference type="FunCoup" id="O67086">
    <property type="interactions" value="490"/>
</dbReference>
<dbReference type="STRING" id="224324.aq_952"/>
<dbReference type="EnsemblBacteria" id="AAC07052">
    <property type="protein sequence ID" value="AAC07052"/>
    <property type="gene ID" value="aq_952"/>
</dbReference>
<dbReference type="KEGG" id="aae:aq_952"/>
<dbReference type="PATRIC" id="fig|224324.8.peg.747"/>
<dbReference type="eggNOG" id="COG0292">
    <property type="taxonomic scope" value="Bacteria"/>
</dbReference>
<dbReference type="HOGENOM" id="CLU_123265_0_1_0"/>
<dbReference type="InParanoid" id="O67086"/>
<dbReference type="OrthoDB" id="9808966at2"/>
<dbReference type="EvolutionaryTrace" id="O67086"/>
<dbReference type="Proteomes" id="UP000000798">
    <property type="component" value="Chromosome"/>
</dbReference>
<dbReference type="GO" id="GO:0022625">
    <property type="term" value="C:cytosolic large ribosomal subunit"/>
    <property type="evidence" value="ECO:0000318"/>
    <property type="project" value="GO_Central"/>
</dbReference>
<dbReference type="GO" id="GO:0019843">
    <property type="term" value="F:rRNA binding"/>
    <property type="evidence" value="ECO:0007669"/>
    <property type="project" value="UniProtKB-UniRule"/>
</dbReference>
<dbReference type="GO" id="GO:0003735">
    <property type="term" value="F:structural constituent of ribosome"/>
    <property type="evidence" value="ECO:0000318"/>
    <property type="project" value="GO_Central"/>
</dbReference>
<dbReference type="GO" id="GO:0000027">
    <property type="term" value="P:ribosomal large subunit assembly"/>
    <property type="evidence" value="ECO:0007669"/>
    <property type="project" value="UniProtKB-UniRule"/>
</dbReference>
<dbReference type="GO" id="GO:0006412">
    <property type="term" value="P:translation"/>
    <property type="evidence" value="ECO:0007669"/>
    <property type="project" value="InterPro"/>
</dbReference>
<dbReference type="CDD" id="cd07026">
    <property type="entry name" value="Ribosomal_L20"/>
    <property type="match status" value="1"/>
</dbReference>
<dbReference type="DisProt" id="DP02143"/>
<dbReference type="FunFam" id="1.10.1900.20:FF:000001">
    <property type="entry name" value="50S ribosomal protein L20"/>
    <property type="match status" value="1"/>
</dbReference>
<dbReference type="Gene3D" id="6.10.160.10">
    <property type="match status" value="1"/>
</dbReference>
<dbReference type="Gene3D" id="1.10.1900.20">
    <property type="entry name" value="Ribosomal protein L20"/>
    <property type="match status" value="1"/>
</dbReference>
<dbReference type="HAMAP" id="MF_00382">
    <property type="entry name" value="Ribosomal_bL20"/>
    <property type="match status" value="1"/>
</dbReference>
<dbReference type="InterPro" id="IPR005813">
    <property type="entry name" value="Ribosomal_bL20"/>
</dbReference>
<dbReference type="InterPro" id="IPR049946">
    <property type="entry name" value="RIBOSOMAL_L20_CS"/>
</dbReference>
<dbReference type="InterPro" id="IPR035566">
    <property type="entry name" value="Ribosomal_protein_bL20_C"/>
</dbReference>
<dbReference type="NCBIfam" id="TIGR01032">
    <property type="entry name" value="rplT_bact"/>
    <property type="match status" value="1"/>
</dbReference>
<dbReference type="PANTHER" id="PTHR10986">
    <property type="entry name" value="39S RIBOSOMAL PROTEIN L20"/>
    <property type="match status" value="1"/>
</dbReference>
<dbReference type="Pfam" id="PF00453">
    <property type="entry name" value="Ribosomal_L20"/>
    <property type="match status" value="1"/>
</dbReference>
<dbReference type="PRINTS" id="PR00062">
    <property type="entry name" value="RIBOSOMALL20"/>
</dbReference>
<dbReference type="SUPFAM" id="SSF74731">
    <property type="entry name" value="Ribosomal protein L20"/>
    <property type="match status" value="1"/>
</dbReference>
<dbReference type="PROSITE" id="PS00937">
    <property type="entry name" value="RIBOSOMAL_L20"/>
    <property type="match status" value="1"/>
</dbReference>
<gene>
    <name type="primary">rplT</name>
    <name type="ordered locus">aq_952</name>
</gene>
<name>RL20_AQUAE</name>
<feature type="chain" id="PRO_0000177109" description="Large ribosomal subunit protein bL20">
    <location>
        <begin position="1"/>
        <end position="118"/>
    </location>
</feature>
<feature type="strand" evidence="3">
    <location>
        <begin position="20"/>
        <end position="22"/>
    </location>
</feature>
<feature type="helix" evidence="3">
    <location>
        <begin position="28"/>
        <end position="68"/>
    </location>
</feature>
<feature type="turn" evidence="3">
    <location>
        <begin position="69"/>
        <end position="71"/>
    </location>
</feature>
<feature type="helix" evidence="3">
    <location>
        <begin position="74"/>
        <end position="81"/>
    </location>
</feature>
<feature type="turn" evidence="3">
    <location>
        <begin position="82"/>
        <end position="85"/>
    </location>
</feature>
<feature type="helix" evidence="3">
    <location>
        <begin position="90"/>
        <end position="99"/>
    </location>
</feature>
<feature type="helix" evidence="3">
    <location>
        <begin position="101"/>
        <end position="115"/>
    </location>
</feature>